<sequence>MSHNHDHNHDHEVITLVDEQGNETLFEILLTIDGREEFGKNYVLLVPAGAEEDADGEIEIQAYSFTENEDGTEGDLQPIPEDSDAEWDMIEEVFNSFIDEN</sequence>
<protein>
    <recommendedName>
        <fullName evidence="1">UPF0473 protein STER_1939</fullName>
    </recommendedName>
</protein>
<name>Y1939_STRTD</name>
<gene>
    <name type="ordered locus">STER_1939</name>
</gene>
<accession>Q03IC3</accession>
<feature type="chain" id="PRO_0000304873" description="UPF0473 protein STER_1939">
    <location>
        <begin position="1"/>
        <end position="101"/>
    </location>
</feature>
<proteinExistence type="inferred from homology"/>
<comment type="similarity">
    <text evidence="1">Belongs to the UPF0473 family.</text>
</comment>
<organism>
    <name type="scientific">Streptococcus thermophilus (strain ATCC BAA-491 / LMD-9)</name>
    <dbReference type="NCBI Taxonomy" id="322159"/>
    <lineage>
        <taxon>Bacteria</taxon>
        <taxon>Bacillati</taxon>
        <taxon>Bacillota</taxon>
        <taxon>Bacilli</taxon>
        <taxon>Lactobacillales</taxon>
        <taxon>Streptococcaceae</taxon>
        <taxon>Streptococcus</taxon>
    </lineage>
</organism>
<evidence type="ECO:0000255" key="1">
    <source>
        <dbReference type="HAMAP-Rule" id="MF_01448"/>
    </source>
</evidence>
<dbReference type="EMBL" id="CP000419">
    <property type="protein sequence ID" value="ABJ67049.1"/>
    <property type="molecule type" value="Genomic_DNA"/>
</dbReference>
<dbReference type="RefSeq" id="WP_011681733.1">
    <property type="nucleotide sequence ID" value="NZ_CP086001.1"/>
</dbReference>
<dbReference type="KEGG" id="ste:STER_1939"/>
<dbReference type="HOGENOM" id="CLU_146610_2_1_9"/>
<dbReference type="HAMAP" id="MF_01448">
    <property type="entry name" value="UPF0473"/>
    <property type="match status" value="1"/>
</dbReference>
<dbReference type="InterPro" id="IPR009711">
    <property type="entry name" value="UPF0473"/>
</dbReference>
<dbReference type="NCBIfam" id="NF010215">
    <property type="entry name" value="PRK13678.1-2"/>
    <property type="match status" value="1"/>
</dbReference>
<dbReference type="NCBIfam" id="NF010217">
    <property type="entry name" value="PRK13678.1-4"/>
    <property type="match status" value="1"/>
</dbReference>
<dbReference type="PANTHER" id="PTHR40066">
    <property type="entry name" value="UPF0473 PROTEIN CBO2561/CLC_2432"/>
    <property type="match status" value="1"/>
</dbReference>
<dbReference type="PANTHER" id="PTHR40066:SF1">
    <property type="entry name" value="UPF0473 PROTEIN CBO2561_CLC_2432"/>
    <property type="match status" value="1"/>
</dbReference>
<dbReference type="Pfam" id="PF06949">
    <property type="entry name" value="DUF1292"/>
    <property type="match status" value="1"/>
</dbReference>
<reference key="1">
    <citation type="journal article" date="2006" name="Proc. Natl. Acad. Sci. U.S.A.">
        <title>Comparative genomics of the lactic acid bacteria.</title>
        <authorList>
            <person name="Makarova K.S."/>
            <person name="Slesarev A."/>
            <person name="Wolf Y.I."/>
            <person name="Sorokin A."/>
            <person name="Mirkin B."/>
            <person name="Koonin E.V."/>
            <person name="Pavlov A."/>
            <person name="Pavlova N."/>
            <person name="Karamychev V."/>
            <person name="Polouchine N."/>
            <person name="Shakhova V."/>
            <person name="Grigoriev I."/>
            <person name="Lou Y."/>
            <person name="Rohksar D."/>
            <person name="Lucas S."/>
            <person name="Huang K."/>
            <person name="Goodstein D.M."/>
            <person name="Hawkins T."/>
            <person name="Plengvidhya V."/>
            <person name="Welker D."/>
            <person name="Hughes J."/>
            <person name="Goh Y."/>
            <person name="Benson A."/>
            <person name="Baldwin K."/>
            <person name="Lee J.-H."/>
            <person name="Diaz-Muniz I."/>
            <person name="Dosti B."/>
            <person name="Smeianov V."/>
            <person name="Wechter W."/>
            <person name="Barabote R."/>
            <person name="Lorca G."/>
            <person name="Altermann E."/>
            <person name="Barrangou R."/>
            <person name="Ganesan B."/>
            <person name="Xie Y."/>
            <person name="Rawsthorne H."/>
            <person name="Tamir D."/>
            <person name="Parker C."/>
            <person name="Breidt F."/>
            <person name="Broadbent J.R."/>
            <person name="Hutkins R."/>
            <person name="O'Sullivan D."/>
            <person name="Steele J."/>
            <person name="Unlu G."/>
            <person name="Saier M.H. Jr."/>
            <person name="Klaenhammer T."/>
            <person name="Richardson P."/>
            <person name="Kozyavkin S."/>
            <person name="Weimer B.C."/>
            <person name="Mills D.A."/>
        </authorList>
    </citation>
    <scope>NUCLEOTIDE SEQUENCE [LARGE SCALE GENOMIC DNA]</scope>
    <source>
        <strain>ATCC BAA-491 / LMD-9</strain>
    </source>
</reference>